<keyword id="KW-0029">Amino-acid transport</keyword>
<keyword id="KW-0997">Cell inner membrane</keyword>
<keyword id="KW-1003">Cell membrane</keyword>
<keyword id="KW-0472">Membrane</keyword>
<keyword id="KW-0769">Symport</keyword>
<keyword id="KW-0812">Transmembrane</keyword>
<keyword id="KW-1133">Transmembrane helix</keyword>
<keyword id="KW-0813">Transport</keyword>
<feature type="chain" id="PRO_1000197550" description="Serine/threonine transporter SstT">
    <location>
        <begin position="1"/>
        <end position="404"/>
    </location>
</feature>
<feature type="transmembrane region" description="Helical" evidence="1">
    <location>
        <begin position="12"/>
        <end position="32"/>
    </location>
</feature>
<feature type="transmembrane region" description="Helical" evidence="1">
    <location>
        <begin position="53"/>
        <end position="73"/>
    </location>
</feature>
<feature type="transmembrane region" description="Helical" evidence="1">
    <location>
        <begin position="81"/>
        <end position="101"/>
    </location>
</feature>
<feature type="transmembrane region" description="Helical" evidence="1">
    <location>
        <begin position="140"/>
        <end position="160"/>
    </location>
</feature>
<feature type="transmembrane region" description="Helical" evidence="1">
    <location>
        <begin position="177"/>
        <end position="197"/>
    </location>
</feature>
<feature type="transmembrane region" description="Helical" evidence="1">
    <location>
        <begin position="216"/>
        <end position="236"/>
    </location>
</feature>
<feature type="transmembrane region" description="Helical" evidence="1">
    <location>
        <begin position="287"/>
        <end position="307"/>
    </location>
</feature>
<feature type="transmembrane region" description="Helical" evidence="1">
    <location>
        <begin position="329"/>
        <end position="349"/>
    </location>
</feature>
<feature type="transmembrane region" description="Helical" evidence="1">
    <location>
        <begin position="356"/>
        <end position="376"/>
    </location>
</feature>
<accession>B3GXM1</accession>
<dbReference type="EMBL" id="CP001091">
    <property type="protein sequence ID" value="ACE61480.1"/>
    <property type="molecule type" value="Genomic_DNA"/>
</dbReference>
<dbReference type="RefSeq" id="WP_005597199.1">
    <property type="nucleotide sequence ID" value="NC_010939.1"/>
</dbReference>
<dbReference type="SMR" id="B3GXM1"/>
<dbReference type="GeneID" id="48598950"/>
<dbReference type="KEGG" id="apa:APP7_0828"/>
<dbReference type="HOGENOM" id="CLU_044581_0_0_6"/>
<dbReference type="Proteomes" id="UP000001226">
    <property type="component" value="Chromosome"/>
</dbReference>
<dbReference type="GO" id="GO:0005886">
    <property type="term" value="C:plasma membrane"/>
    <property type="evidence" value="ECO:0007669"/>
    <property type="project" value="UniProtKB-SubCell"/>
</dbReference>
<dbReference type="GO" id="GO:0005295">
    <property type="term" value="F:neutral L-amino acid:sodium symporter activity"/>
    <property type="evidence" value="ECO:0007669"/>
    <property type="project" value="TreeGrafter"/>
</dbReference>
<dbReference type="GO" id="GO:0032329">
    <property type="term" value="P:serine transport"/>
    <property type="evidence" value="ECO:0007669"/>
    <property type="project" value="InterPro"/>
</dbReference>
<dbReference type="GO" id="GO:0015826">
    <property type="term" value="P:threonine transport"/>
    <property type="evidence" value="ECO:0007669"/>
    <property type="project" value="InterPro"/>
</dbReference>
<dbReference type="FunFam" id="1.10.3860.10:FF:000003">
    <property type="entry name" value="Serine/threonine transporter sstT"/>
    <property type="match status" value="1"/>
</dbReference>
<dbReference type="Gene3D" id="1.10.3860.10">
    <property type="entry name" value="Sodium:dicarboxylate symporter"/>
    <property type="match status" value="1"/>
</dbReference>
<dbReference type="HAMAP" id="MF_01582">
    <property type="entry name" value="Ser_Thr_transp_SstT"/>
    <property type="match status" value="1"/>
</dbReference>
<dbReference type="InterPro" id="IPR001991">
    <property type="entry name" value="Na-dicarboxylate_symporter"/>
</dbReference>
<dbReference type="InterPro" id="IPR036458">
    <property type="entry name" value="Na:dicarbo_symporter_sf"/>
</dbReference>
<dbReference type="InterPro" id="IPR023025">
    <property type="entry name" value="Ser_Thr_transp_SstT"/>
</dbReference>
<dbReference type="NCBIfam" id="NF010151">
    <property type="entry name" value="PRK13628.1"/>
    <property type="match status" value="1"/>
</dbReference>
<dbReference type="PANTHER" id="PTHR42865">
    <property type="entry name" value="PROTON/GLUTAMATE-ASPARTATE SYMPORTER"/>
    <property type="match status" value="1"/>
</dbReference>
<dbReference type="PANTHER" id="PTHR42865:SF8">
    <property type="entry name" value="SERINE_THREONINE TRANSPORTER SSTT"/>
    <property type="match status" value="1"/>
</dbReference>
<dbReference type="Pfam" id="PF00375">
    <property type="entry name" value="SDF"/>
    <property type="match status" value="1"/>
</dbReference>
<dbReference type="PRINTS" id="PR00173">
    <property type="entry name" value="EDTRNSPORT"/>
</dbReference>
<dbReference type="SUPFAM" id="SSF118215">
    <property type="entry name" value="Proton glutamate symport protein"/>
    <property type="match status" value="1"/>
</dbReference>
<evidence type="ECO:0000255" key="1">
    <source>
        <dbReference type="HAMAP-Rule" id="MF_01582"/>
    </source>
</evidence>
<name>SSTT_ACTP7</name>
<sequence length="404" mass="41870">MSNPSLSSKLLGGNLVLRIAIGLVLGACLALVNPDWAKNVGVLGQFFVKSLRAIAPILVFVLVLSAIANKEVGSDSKLKPILVMYVLGTFVAALTAVVLSFMFPTTLELVSNPDNLNPPQGIGEIIKTVVFNLVDNPLQALANANFIGILAWAIGLGIALRHAAPSTKTFLNDFAEAVSFVVKVVIAFAPIGVFGLVAETIATNGADAFVGYARLLGVLLGAMVIVAFVLNPLIVFWKIRRNPYPLTLTCLRESGVTAFFTRSSAANIPVNMNLAKRLGVRDEIASVAIPLGATINMAGAAITVTVLTLAAAYTQGIQPDFATALLLSIVASVCACGASGVAGGSLLLIPLACSLFNIPNDIAAQVIGVGFIIGVIQDSAETALNSSTDVLFTAAVSQAEDQKA</sequence>
<organism>
    <name type="scientific">Actinobacillus pleuropneumoniae serotype 7 (strain AP76)</name>
    <dbReference type="NCBI Taxonomy" id="537457"/>
    <lineage>
        <taxon>Bacteria</taxon>
        <taxon>Pseudomonadati</taxon>
        <taxon>Pseudomonadota</taxon>
        <taxon>Gammaproteobacteria</taxon>
        <taxon>Pasteurellales</taxon>
        <taxon>Pasteurellaceae</taxon>
        <taxon>Actinobacillus</taxon>
    </lineage>
</organism>
<proteinExistence type="inferred from homology"/>
<comment type="function">
    <text evidence="1">Involved in the import of serine and threonine into the cell, with the concomitant import of sodium (symport system).</text>
</comment>
<comment type="catalytic activity">
    <reaction evidence="1">
        <text>L-serine(in) + Na(+)(in) = L-serine(out) + Na(+)(out)</text>
        <dbReference type="Rhea" id="RHEA:29575"/>
        <dbReference type="ChEBI" id="CHEBI:29101"/>
        <dbReference type="ChEBI" id="CHEBI:33384"/>
    </reaction>
    <physiologicalReaction direction="right-to-left" evidence="1">
        <dbReference type="Rhea" id="RHEA:29577"/>
    </physiologicalReaction>
</comment>
<comment type="catalytic activity">
    <reaction evidence="1">
        <text>L-threonine(in) + Na(+)(in) = L-threonine(out) + Na(+)(out)</text>
        <dbReference type="Rhea" id="RHEA:69999"/>
        <dbReference type="ChEBI" id="CHEBI:29101"/>
        <dbReference type="ChEBI" id="CHEBI:57926"/>
    </reaction>
    <physiologicalReaction direction="right-to-left" evidence="1">
        <dbReference type="Rhea" id="RHEA:70001"/>
    </physiologicalReaction>
</comment>
<comment type="subcellular location">
    <subcellularLocation>
        <location evidence="1">Cell inner membrane</location>
        <topology evidence="1">Multi-pass membrane protein</topology>
    </subcellularLocation>
</comment>
<comment type="similarity">
    <text evidence="1">Belongs to the dicarboxylate/amino acid:cation symporter (DAACS) (TC 2.A.23) family.</text>
</comment>
<reference key="1">
    <citation type="submission" date="2008-06" db="EMBL/GenBank/DDBJ databases">
        <title>Genome and proteome analysis of A. pleuropneumoniae serotype 7.</title>
        <authorList>
            <person name="Linke B."/>
            <person name="Buettner F."/>
            <person name="Martinez-Arias R."/>
            <person name="Goesmann A."/>
            <person name="Baltes N."/>
            <person name="Tegetmeyer H."/>
            <person name="Singh M."/>
            <person name="Gerlach G.F."/>
        </authorList>
    </citation>
    <scope>NUCLEOTIDE SEQUENCE [LARGE SCALE GENOMIC DNA]</scope>
    <source>
        <strain>AP76</strain>
    </source>
</reference>
<gene>
    <name evidence="1" type="primary">sstT</name>
    <name type="ordered locus">APP7_0828</name>
</gene>
<protein>
    <recommendedName>
        <fullName evidence="1">Serine/threonine transporter SstT</fullName>
    </recommendedName>
    <alternativeName>
        <fullName evidence="1">Na(+)/serine-threonine symporter</fullName>
    </alternativeName>
</protein>